<organism>
    <name type="scientific">Streptococcus pneumoniae serotype 4 (strain ATCC BAA-334 / TIGR4)</name>
    <dbReference type="NCBI Taxonomy" id="170187"/>
    <lineage>
        <taxon>Bacteria</taxon>
        <taxon>Bacillati</taxon>
        <taxon>Bacillota</taxon>
        <taxon>Bacilli</taxon>
        <taxon>Lactobacillales</taxon>
        <taxon>Streptococcaceae</taxon>
        <taxon>Streptococcus</taxon>
    </lineage>
</organism>
<feature type="chain" id="PRO_0000174601" description="S-adenosylmethionine synthase">
    <location>
        <begin position="1"/>
        <end position="396"/>
    </location>
</feature>
<feature type="region of interest" description="Flexible loop" evidence="1">
    <location>
        <begin position="100"/>
        <end position="110"/>
    </location>
</feature>
<feature type="binding site" description="in other chain" evidence="1">
    <location>
        <position position="16"/>
    </location>
    <ligand>
        <name>ATP</name>
        <dbReference type="ChEBI" id="CHEBI:30616"/>
        <note>ligand shared between two neighboring subunits</note>
    </ligand>
</feature>
<feature type="binding site" evidence="1">
    <location>
        <position position="18"/>
    </location>
    <ligand>
        <name>Mg(2+)</name>
        <dbReference type="ChEBI" id="CHEBI:18420"/>
    </ligand>
</feature>
<feature type="binding site" evidence="1">
    <location>
        <position position="44"/>
    </location>
    <ligand>
        <name>K(+)</name>
        <dbReference type="ChEBI" id="CHEBI:29103"/>
    </ligand>
</feature>
<feature type="binding site" description="in other chain" evidence="1">
    <location>
        <position position="57"/>
    </location>
    <ligand>
        <name>L-methionine</name>
        <dbReference type="ChEBI" id="CHEBI:57844"/>
        <note>ligand shared between two neighboring subunits</note>
    </ligand>
</feature>
<feature type="binding site" description="in other chain" evidence="1">
    <location>
        <position position="100"/>
    </location>
    <ligand>
        <name>L-methionine</name>
        <dbReference type="ChEBI" id="CHEBI:57844"/>
        <note>ligand shared between two neighboring subunits</note>
    </ligand>
</feature>
<feature type="binding site" description="in other chain" evidence="1">
    <location>
        <begin position="175"/>
        <end position="177"/>
    </location>
    <ligand>
        <name>ATP</name>
        <dbReference type="ChEBI" id="CHEBI:30616"/>
        <note>ligand shared between two neighboring subunits</note>
    </ligand>
</feature>
<feature type="binding site" description="in other chain" evidence="1">
    <location>
        <begin position="242"/>
        <end position="243"/>
    </location>
    <ligand>
        <name>ATP</name>
        <dbReference type="ChEBI" id="CHEBI:30616"/>
        <note>ligand shared between two neighboring subunits</note>
    </ligand>
</feature>
<feature type="binding site" evidence="1">
    <location>
        <position position="251"/>
    </location>
    <ligand>
        <name>ATP</name>
        <dbReference type="ChEBI" id="CHEBI:30616"/>
        <note>ligand shared between two neighboring subunits</note>
    </ligand>
</feature>
<feature type="binding site" evidence="1">
    <location>
        <position position="251"/>
    </location>
    <ligand>
        <name>L-methionine</name>
        <dbReference type="ChEBI" id="CHEBI:57844"/>
        <note>ligand shared between two neighboring subunits</note>
    </ligand>
</feature>
<feature type="binding site" description="in other chain" evidence="1">
    <location>
        <begin position="257"/>
        <end position="258"/>
    </location>
    <ligand>
        <name>ATP</name>
        <dbReference type="ChEBI" id="CHEBI:30616"/>
        <note>ligand shared between two neighboring subunits</note>
    </ligand>
</feature>
<feature type="binding site" evidence="1">
    <location>
        <position position="274"/>
    </location>
    <ligand>
        <name>ATP</name>
        <dbReference type="ChEBI" id="CHEBI:30616"/>
        <note>ligand shared between two neighboring subunits</note>
    </ligand>
</feature>
<feature type="binding site" evidence="1">
    <location>
        <position position="278"/>
    </location>
    <ligand>
        <name>ATP</name>
        <dbReference type="ChEBI" id="CHEBI:30616"/>
        <note>ligand shared between two neighboring subunits</note>
    </ligand>
</feature>
<feature type="binding site" description="in other chain" evidence="1">
    <location>
        <position position="282"/>
    </location>
    <ligand>
        <name>L-methionine</name>
        <dbReference type="ChEBI" id="CHEBI:57844"/>
        <note>ligand shared between two neighboring subunits</note>
    </ligand>
</feature>
<reference key="1">
    <citation type="journal article" date="2001" name="Science">
        <title>Complete genome sequence of a virulent isolate of Streptococcus pneumoniae.</title>
        <authorList>
            <person name="Tettelin H."/>
            <person name="Nelson K.E."/>
            <person name="Paulsen I.T."/>
            <person name="Eisen J.A."/>
            <person name="Read T.D."/>
            <person name="Peterson S.N."/>
            <person name="Heidelberg J.F."/>
            <person name="DeBoy R.T."/>
            <person name="Haft D.H."/>
            <person name="Dodson R.J."/>
            <person name="Durkin A.S."/>
            <person name="Gwinn M.L."/>
            <person name="Kolonay J.F."/>
            <person name="Nelson W.C."/>
            <person name="Peterson J.D."/>
            <person name="Umayam L.A."/>
            <person name="White O."/>
            <person name="Salzberg S.L."/>
            <person name="Lewis M.R."/>
            <person name="Radune D."/>
            <person name="Holtzapple E.K."/>
            <person name="Khouri H.M."/>
            <person name="Wolf A.M."/>
            <person name="Utterback T.R."/>
            <person name="Hansen C.L."/>
            <person name="McDonald L.A."/>
            <person name="Feldblyum T.V."/>
            <person name="Angiuoli S.V."/>
            <person name="Dickinson T."/>
            <person name="Hickey E.K."/>
            <person name="Holt I.E."/>
            <person name="Loftus B.J."/>
            <person name="Yang F."/>
            <person name="Smith H.O."/>
            <person name="Venter J.C."/>
            <person name="Dougherty B.A."/>
            <person name="Morrison D.A."/>
            <person name="Hollingshead S.K."/>
            <person name="Fraser C.M."/>
        </authorList>
    </citation>
    <scope>NUCLEOTIDE SEQUENCE [LARGE SCALE GENOMIC DNA]</scope>
    <source>
        <strain>ATCC BAA-334 / TIGR4</strain>
    </source>
</reference>
<evidence type="ECO:0000255" key="1">
    <source>
        <dbReference type="HAMAP-Rule" id="MF_00086"/>
    </source>
</evidence>
<proteinExistence type="inferred from homology"/>
<sequence length="396" mass="43173">MSERKLFTSESVSEGHPDKIADQISDAILDAILAKDPEAHVAAETAVYTGSVHVFGEISTNAYVDINRVVRDTIAEIGYTNTEYGFSAETVGVHPSLVEQSPDIAQGVNEALEVRGNADQDPLDLIGAGDQGLMFGFAVDETEELMPLPIALSHKLVRRLAELRKSGEISYLRPDAKSQVTVEYDENDRPVRVDTVVISTQHDPEATNEQIHQDVIDKVIKEVIPSSYLDDKTKFFINPTGRFVIGGPQGDSGLTGRKIIVDTYGGYSRHGGGAFSGKDATKVDRSASYAARYIAKNIVAADLAKKAEVQLAYAIGVAQPVSVRIDTFGTGTVAESQLEKAARQIFDLRPAGIIQMLDLKRPIYRQTSAYGHMGRTDIDLPWERLDKVDALKEAVK</sequence>
<gene>
    <name evidence="1" type="primary">metK</name>
    <name type="ordered locus">SP_0762</name>
</gene>
<protein>
    <recommendedName>
        <fullName evidence="1">S-adenosylmethionine synthase</fullName>
        <shortName evidence="1">AdoMet synthase</shortName>
        <ecNumber evidence="1">2.5.1.6</ecNumber>
    </recommendedName>
    <alternativeName>
        <fullName evidence="1">MAT</fullName>
    </alternativeName>
    <alternativeName>
        <fullName evidence="1">Methionine adenosyltransferase</fullName>
    </alternativeName>
</protein>
<comment type="function">
    <text evidence="1">Catalyzes the formation of S-adenosylmethionine (AdoMet) from methionine and ATP. The overall synthetic reaction is composed of two sequential steps, AdoMet formation and the subsequent tripolyphosphate hydrolysis which occurs prior to release of AdoMet from the enzyme.</text>
</comment>
<comment type="catalytic activity">
    <reaction evidence="1">
        <text>L-methionine + ATP + H2O = S-adenosyl-L-methionine + phosphate + diphosphate</text>
        <dbReference type="Rhea" id="RHEA:21080"/>
        <dbReference type="ChEBI" id="CHEBI:15377"/>
        <dbReference type="ChEBI" id="CHEBI:30616"/>
        <dbReference type="ChEBI" id="CHEBI:33019"/>
        <dbReference type="ChEBI" id="CHEBI:43474"/>
        <dbReference type="ChEBI" id="CHEBI:57844"/>
        <dbReference type="ChEBI" id="CHEBI:59789"/>
        <dbReference type="EC" id="2.5.1.6"/>
    </reaction>
</comment>
<comment type="cofactor">
    <cofactor evidence="1">
        <name>Mg(2+)</name>
        <dbReference type="ChEBI" id="CHEBI:18420"/>
    </cofactor>
    <text evidence="1">Binds 2 divalent ions per subunit.</text>
</comment>
<comment type="cofactor">
    <cofactor evidence="1">
        <name>K(+)</name>
        <dbReference type="ChEBI" id="CHEBI:29103"/>
    </cofactor>
    <text evidence="1">Binds 1 potassium ion per subunit.</text>
</comment>
<comment type="pathway">
    <text evidence="1">Amino-acid biosynthesis; S-adenosyl-L-methionine biosynthesis; S-adenosyl-L-methionine from L-methionine: step 1/1.</text>
</comment>
<comment type="subunit">
    <text evidence="1">Homotetramer; dimer of dimers.</text>
</comment>
<comment type="subcellular location">
    <subcellularLocation>
        <location evidence="1">Cytoplasm</location>
    </subcellularLocation>
</comment>
<comment type="similarity">
    <text evidence="1">Belongs to the AdoMet synthase family.</text>
</comment>
<keyword id="KW-0067">ATP-binding</keyword>
<keyword id="KW-0963">Cytoplasm</keyword>
<keyword id="KW-0460">Magnesium</keyword>
<keyword id="KW-0479">Metal-binding</keyword>
<keyword id="KW-0547">Nucleotide-binding</keyword>
<keyword id="KW-0554">One-carbon metabolism</keyword>
<keyword id="KW-0630">Potassium</keyword>
<keyword id="KW-1185">Reference proteome</keyword>
<keyword id="KW-0808">Transferase</keyword>
<accession>Q97RN9</accession>
<dbReference type="EC" id="2.5.1.6" evidence="1"/>
<dbReference type="EMBL" id="AE005672">
    <property type="protein sequence ID" value="AAK74900.1"/>
    <property type="molecule type" value="Genomic_DNA"/>
</dbReference>
<dbReference type="PIR" id="C95088">
    <property type="entry name" value="C95088"/>
</dbReference>
<dbReference type="RefSeq" id="WP_000003934.1">
    <property type="nucleotide sequence ID" value="NZ_CP155539.1"/>
</dbReference>
<dbReference type="SMR" id="Q97RN9"/>
<dbReference type="PaxDb" id="170187-SP_0762"/>
<dbReference type="EnsemblBacteria" id="AAK74900">
    <property type="protein sequence ID" value="AAK74900"/>
    <property type="gene ID" value="SP_0762"/>
</dbReference>
<dbReference type="KEGG" id="spn:SP_0762"/>
<dbReference type="eggNOG" id="COG0192">
    <property type="taxonomic scope" value="Bacteria"/>
</dbReference>
<dbReference type="PhylomeDB" id="Q97RN9"/>
<dbReference type="BioCyc" id="SPNE170187:G1FZB-778-MONOMER"/>
<dbReference type="UniPathway" id="UPA00315">
    <property type="reaction ID" value="UER00080"/>
</dbReference>
<dbReference type="Proteomes" id="UP000000585">
    <property type="component" value="Chromosome"/>
</dbReference>
<dbReference type="GO" id="GO:0005737">
    <property type="term" value="C:cytoplasm"/>
    <property type="evidence" value="ECO:0007669"/>
    <property type="project" value="UniProtKB-SubCell"/>
</dbReference>
<dbReference type="GO" id="GO:0005524">
    <property type="term" value="F:ATP binding"/>
    <property type="evidence" value="ECO:0007669"/>
    <property type="project" value="UniProtKB-UniRule"/>
</dbReference>
<dbReference type="GO" id="GO:0000287">
    <property type="term" value="F:magnesium ion binding"/>
    <property type="evidence" value="ECO:0007669"/>
    <property type="project" value="UniProtKB-UniRule"/>
</dbReference>
<dbReference type="GO" id="GO:0004478">
    <property type="term" value="F:methionine adenosyltransferase activity"/>
    <property type="evidence" value="ECO:0007669"/>
    <property type="project" value="UniProtKB-UniRule"/>
</dbReference>
<dbReference type="GO" id="GO:0006730">
    <property type="term" value="P:one-carbon metabolic process"/>
    <property type="evidence" value="ECO:0007669"/>
    <property type="project" value="UniProtKB-KW"/>
</dbReference>
<dbReference type="GO" id="GO:0006556">
    <property type="term" value="P:S-adenosylmethionine biosynthetic process"/>
    <property type="evidence" value="ECO:0007669"/>
    <property type="project" value="UniProtKB-UniRule"/>
</dbReference>
<dbReference type="CDD" id="cd18079">
    <property type="entry name" value="S-AdoMet_synt"/>
    <property type="match status" value="1"/>
</dbReference>
<dbReference type="FunFam" id="3.30.300.10:FF:000003">
    <property type="entry name" value="S-adenosylmethionine synthase"/>
    <property type="match status" value="1"/>
</dbReference>
<dbReference type="Gene3D" id="3.30.300.10">
    <property type="match status" value="3"/>
</dbReference>
<dbReference type="HAMAP" id="MF_00086">
    <property type="entry name" value="S_AdoMet_synth1"/>
    <property type="match status" value="1"/>
</dbReference>
<dbReference type="InterPro" id="IPR022631">
    <property type="entry name" value="ADOMET_SYNTHASE_CS"/>
</dbReference>
<dbReference type="InterPro" id="IPR022630">
    <property type="entry name" value="S-AdoMet_synt_C"/>
</dbReference>
<dbReference type="InterPro" id="IPR022629">
    <property type="entry name" value="S-AdoMet_synt_central"/>
</dbReference>
<dbReference type="InterPro" id="IPR022628">
    <property type="entry name" value="S-AdoMet_synt_N"/>
</dbReference>
<dbReference type="InterPro" id="IPR002133">
    <property type="entry name" value="S-AdoMet_synthetase"/>
</dbReference>
<dbReference type="InterPro" id="IPR022636">
    <property type="entry name" value="S-AdoMet_synthetase_sfam"/>
</dbReference>
<dbReference type="NCBIfam" id="TIGR01034">
    <property type="entry name" value="metK"/>
    <property type="match status" value="1"/>
</dbReference>
<dbReference type="PANTHER" id="PTHR11964">
    <property type="entry name" value="S-ADENOSYLMETHIONINE SYNTHETASE"/>
    <property type="match status" value="1"/>
</dbReference>
<dbReference type="Pfam" id="PF02773">
    <property type="entry name" value="S-AdoMet_synt_C"/>
    <property type="match status" value="1"/>
</dbReference>
<dbReference type="Pfam" id="PF02772">
    <property type="entry name" value="S-AdoMet_synt_M"/>
    <property type="match status" value="1"/>
</dbReference>
<dbReference type="Pfam" id="PF00438">
    <property type="entry name" value="S-AdoMet_synt_N"/>
    <property type="match status" value="1"/>
</dbReference>
<dbReference type="PIRSF" id="PIRSF000497">
    <property type="entry name" value="MAT"/>
    <property type="match status" value="1"/>
</dbReference>
<dbReference type="SUPFAM" id="SSF55973">
    <property type="entry name" value="S-adenosylmethionine synthetase"/>
    <property type="match status" value="3"/>
</dbReference>
<dbReference type="PROSITE" id="PS00376">
    <property type="entry name" value="ADOMET_SYNTHASE_1"/>
    <property type="match status" value="1"/>
</dbReference>
<dbReference type="PROSITE" id="PS00377">
    <property type="entry name" value="ADOMET_SYNTHASE_2"/>
    <property type="match status" value="1"/>
</dbReference>
<name>METK_STRPN</name>